<name>DEF72_ARATH</name>
<accession>Q2V2S9</accession>
<gene>
    <name type="ordered locus">At2g22345</name>
    <name type="ORF">F14M13</name>
</gene>
<keyword id="KW-0929">Antimicrobial</keyword>
<keyword id="KW-1015">Disulfide bond</keyword>
<keyword id="KW-0295">Fungicide</keyword>
<keyword id="KW-0611">Plant defense</keyword>
<keyword id="KW-1185">Reference proteome</keyword>
<feature type="chain" id="PRO_0000379648" description="Putative defensin-like protein 72">
    <location>
        <begin position="1"/>
        <end position="61"/>
    </location>
</feature>
<feature type="disulfide bond" evidence="1">
    <location>
        <begin position="21"/>
        <end position="59"/>
    </location>
</feature>
<feature type="disulfide bond" evidence="1">
    <location>
        <begin position="25"/>
        <end position="48"/>
    </location>
</feature>
<feature type="disulfide bond" evidence="1">
    <location>
        <begin position="34"/>
        <end position="57"/>
    </location>
</feature>
<feature type="disulfide bond" evidence="1">
    <location>
        <begin position="38"/>
        <end position="58"/>
    </location>
</feature>
<reference key="1">
    <citation type="journal article" date="1999" name="Nature">
        <title>Sequence and analysis of chromosome 2 of the plant Arabidopsis thaliana.</title>
        <authorList>
            <person name="Lin X."/>
            <person name="Kaul S."/>
            <person name="Rounsley S.D."/>
            <person name="Shea T.P."/>
            <person name="Benito M.-I."/>
            <person name="Town C.D."/>
            <person name="Fujii C.Y."/>
            <person name="Mason T.M."/>
            <person name="Bowman C.L."/>
            <person name="Barnstead M.E."/>
            <person name="Feldblyum T.V."/>
            <person name="Buell C.R."/>
            <person name="Ketchum K.A."/>
            <person name="Lee J.J."/>
            <person name="Ronning C.M."/>
            <person name="Koo H.L."/>
            <person name="Moffat K.S."/>
            <person name="Cronin L.A."/>
            <person name="Shen M."/>
            <person name="Pai G."/>
            <person name="Van Aken S."/>
            <person name="Umayam L."/>
            <person name="Tallon L.J."/>
            <person name="Gill J.E."/>
            <person name="Adams M.D."/>
            <person name="Carrera A.J."/>
            <person name="Creasy T.H."/>
            <person name="Goodman H.M."/>
            <person name="Somerville C.R."/>
            <person name="Copenhaver G.P."/>
            <person name="Preuss D."/>
            <person name="Nierman W.C."/>
            <person name="White O."/>
            <person name="Eisen J.A."/>
            <person name="Salzberg S.L."/>
            <person name="Fraser C.M."/>
            <person name="Venter J.C."/>
        </authorList>
    </citation>
    <scope>NUCLEOTIDE SEQUENCE [LARGE SCALE GENOMIC DNA]</scope>
    <source>
        <strain>cv. Columbia</strain>
    </source>
</reference>
<reference key="2">
    <citation type="journal article" date="2017" name="Plant J.">
        <title>Araport11: a complete reannotation of the Arabidopsis thaliana reference genome.</title>
        <authorList>
            <person name="Cheng C.Y."/>
            <person name="Krishnakumar V."/>
            <person name="Chan A.P."/>
            <person name="Thibaud-Nissen F."/>
            <person name="Schobel S."/>
            <person name="Town C.D."/>
        </authorList>
    </citation>
    <scope>GENOME REANNOTATION</scope>
    <source>
        <strain>cv. Columbia</strain>
    </source>
</reference>
<reference key="3">
    <citation type="journal article" date="2005" name="Plant Physiol.">
        <title>Genome organization of more than 300 defensin-like genes in Arabidopsis.</title>
        <authorList>
            <person name="Silverstein K.A.T."/>
            <person name="Graham M.A."/>
            <person name="Paape T.D."/>
            <person name="VandenBosch K.A."/>
        </authorList>
    </citation>
    <scope>GENE FAMILY</scope>
</reference>
<sequence length="61" mass="6844">MKLSILVKAMKRNNGFRYDYCIAECSEHFLDDVCKPVCIDKGYSDGGCIGLAPNFKCCCKK</sequence>
<dbReference type="EMBL" id="AC006592">
    <property type="status" value="NOT_ANNOTATED_CDS"/>
    <property type="molecule type" value="Genomic_DNA"/>
</dbReference>
<dbReference type="EMBL" id="CP002685">
    <property type="protein sequence ID" value="AEC07296.1"/>
    <property type="molecule type" value="Genomic_DNA"/>
</dbReference>
<dbReference type="RefSeq" id="NP_001031395.1">
    <property type="nucleotide sequence ID" value="NM_001036318.1"/>
</dbReference>
<dbReference type="SMR" id="Q2V2S9"/>
<dbReference type="STRING" id="3702.Q2V2S9"/>
<dbReference type="PaxDb" id="3702-AT2G22345.1"/>
<dbReference type="EnsemblPlants" id="AT2G22345.1">
    <property type="protein sequence ID" value="AT2G22345.1"/>
    <property type="gene ID" value="AT2G22345"/>
</dbReference>
<dbReference type="GeneID" id="3768035"/>
<dbReference type="Gramene" id="AT2G22345.1">
    <property type="protein sequence ID" value="AT2G22345.1"/>
    <property type="gene ID" value="AT2G22345"/>
</dbReference>
<dbReference type="KEGG" id="ath:AT2G22345"/>
<dbReference type="Araport" id="AT2G22345"/>
<dbReference type="TAIR" id="AT2G22345"/>
<dbReference type="HOGENOM" id="CLU_2925761_0_0_1"/>
<dbReference type="InParanoid" id="Q2V2S9"/>
<dbReference type="OrthoDB" id="10439017at2759"/>
<dbReference type="PhylomeDB" id="Q2V2S9"/>
<dbReference type="Proteomes" id="UP000006548">
    <property type="component" value="Chromosome 2"/>
</dbReference>
<dbReference type="ExpressionAtlas" id="Q2V2S9">
    <property type="expression patterns" value="baseline"/>
</dbReference>
<dbReference type="GO" id="GO:0050832">
    <property type="term" value="P:defense response to fungus"/>
    <property type="evidence" value="ECO:0007669"/>
    <property type="project" value="UniProtKB-KW"/>
</dbReference>
<dbReference type="GO" id="GO:0031640">
    <property type="term" value="P:killing of cells of another organism"/>
    <property type="evidence" value="ECO:0007669"/>
    <property type="project" value="UniProtKB-KW"/>
</dbReference>
<dbReference type="InterPro" id="IPR056373">
    <property type="entry name" value="Defensin-like_dom"/>
</dbReference>
<dbReference type="Pfam" id="PF24552">
    <property type="entry name" value="Defensin"/>
    <property type="match status" value="1"/>
</dbReference>
<organism>
    <name type="scientific">Arabidopsis thaliana</name>
    <name type="common">Mouse-ear cress</name>
    <dbReference type="NCBI Taxonomy" id="3702"/>
    <lineage>
        <taxon>Eukaryota</taxon>
        <taxon>Viridiplantae</taxon>
        <taxon>Streptophyta</taxon>
        <taxon>Embryophyta</taxon>
        <taxon>Tracheophyta</taxon>
        <taxon>Spermatophyta</taxon>
        <taxon>Magnoliopsida</taxon>
        <taxon>eudicotyledons</taxon>
        <taxon>Gunneridae</taxon>
        <taxon>Pentapetalae</taxon>
        <taxon>rosids</taxon>
        <taxon>malvids</taxon>
        <taxon>Brassicales</taxon>
        <taxon>Brassicaceae</taxon>
        <taxon>Camelineae</taxon>
        <taxon>Arabidopsis</taxon>
    </lineage>
</organism>
<protein>
    <recommendedName>
        <fullName>Putative defensin-like protein 72</fullName>
    </recommendedName>
</protein>
<proteinExistence type="uncertain"/>
<evidence type="ECO:0000250" key="1"/>
<evidence type="ECO:0000305" key="2"/>
<comment type="similarity">
    <text evidence="2">Belongs to the DEFL family.</text>
</comment>
<comment type="caution">
    <text evidence="2">Could be the product of a pseudogene. Lacks the signal peptide, which is a conserved features of the family.</text>
</comment>